<feature type="chain" id="PRO_0000046333" description="Zinc-transporting ATPase">
    <location>
        <begin position="1"/>
        <end position="721"/>
    </location>
</feature>
<feature type="topological domain" description="Cytoplasmic" evidence="1">
    <location>
        <begin position="1"/>
        <end position="107"/>
    </location>
</feature>
<feature type="transmembrane region" description="Helical" evidence="1">
    <location>
        <begin position="108"/>
        <end position="128"/>
    </location>
</feature>
<feature type="topological domain" description="Extracellular" evidence="1">
    <location>
        <begin position="129"/>
        <end position="140"/>
    </location>
</feature>
<feature type="transmembrane region" description="Helical" evidence="1">
    <location>
        <begin position="141"/>
        <end position="160"/>
    </location>
</feature>
<feature type="topological domain" description="Cytoplasmic" evidence="1">
    <location>
        <begin position="161"/>
        <end position="167"/>
    </location>
</feature>
<feature type="transmembrane region" description="Helical" evidence="1">
    <location>
        <begin position="168"/>
        <end position="187"/>
    </location>
</feature>
<feature type="topological domain" description="Extracellular" evidence="1">
    <location>
        <begin position="188"/>
        <end position="190"/>
    </location>
</feature>
<feature type="transmembrane region" description="Helical" evidence="1">
    <location>
        <begin position="191"/>
        <end position="210"/>
    </location>
</feature>
<feature type="topological domain" description="Cytoplasmic" evidence="1">
    <location>
        <begin position="211"/>
        <end position="344"/>
    </location>
</feature>
<feature type="transmembrane region" description="Helical" evidence="1">
    <location>
        <begin position="345"/>
        <end position="363"/>
    </location>
</feature>
<feature type="topological domain" description="Extracellular" evidence="1">
    <location>
        <begin position="364"/>
        <end position="369"/>
    </location>
</feature>
<feature type="transmembrane region" description="Helical" evidence="1">
    <location>
        <begin position="370"/>
        <end position="387"/>
    </location>
</feature>
<feature type="topological domain" description="Cytoplasmic" evidence="1">
    <location>
        <begin position="388"/>
        <end position="671"/>
    </location>
</feature>
<feature type="transmembrane region" description="Helical" evidence="1">
    <location>
        <begin position="672"/>
        <end position="693"/>
    </location>
</feature>
<feature type="topological domain" description="Extracellular" evidence="1">
    <location>
        <begin position="694"/>
        <end position="701"/>
    </location>
</feature>
<feature type="transmembrane region" description="Helical" evidence="1">
    <location>
        <begin position="702"/>
        <end position="717"/>
    </location>
</feature>
<feature type="topological domain" description="Cytoplasmic" evidence="1">
    <location>
        <begin position="718"/>
        <end position="721"/>
    </location>
</feature>
<feature type="domain" description="HMA" evidence="2">
    <location>
        <begin position="8"/>
        <end position="74"/>
    </location>
</feature>
<feature type="region of interest" description="Disordered" evidence="3">
    <location>
        <begin position="80"/>
        <end position="101"/>
    </location>
</feature>
<feature type="active site" description="4-aspartylphosphate intermediate" evidence="1">
    <location>
        <position position="425"/>
    </location>
</feature>
<feature type="binding site" evidence="2">
    <location>
        <position position="19"/>
    </location>
    <ligand>
        <name>Zn(2+)</name>
        <dbReference type="ChEBI" id="CHEBI:29105"/>
    </ligand>
</feature>
<feature type="binding site" evidence="2">
    <location>
        <position position="22"/>
    </location>
    <ligand>
        <name>Zn(2+)</name>
        <dbReference type="ChEBI" id="CHEBI:29105"/>
    </ligand>
</feature>
<feature type="binding site">
    <location>
        <position position="618"/>
    </location>
    <ligand>
        <name>Mg(2+)</name>
        <dbReference type="ChEBI" id="CHEBI:18420"/>
    </ligand>
</feature>
<feature type="binding site">
    <location>
        <position position="622"/>
    </location>
    <ligand>
        <name>Mg(2+)</name>
        <dbReference type="ChEBI" id="CHEBI:18420"/>
    </ligand>
</feature>
<feature type="strand" evidence="5">
    <location>
        <begin position="8"/>
        <end position="15"/>
    </location>
</feature>
<feature type="helix" evidence="5">
    <location>
        <begin position="21"/>
        <end position="23"/>
    </location>
</feature>
<feature type="helix" evidence="5">
    <location>
        <begin position="24"/>
        <end position="27"/>
    </location>
</feature>
<feature type="helix" evidence="5">
    <location>
        <begin position="29"/>
        <end position="32"/>
    </location>
</feature>
<feature type="strand" evidence="5">
    <location>
        <begin position="34"/>
        <end position="42"/>
    </location>
</feature>
<feature type="turn" evidence="5">
    <location>
        <begin position="43"/>
        <end position="46"/>
    </location>
</feature>
<feature type="strand" evidence="5">
    <location>
        <begin position="47"/>
        <end position="52"/>
    </location>
</feature>
<feature type="turn" evidence="5">
    <location>
        <begin position="54"/>
        <end position="56"/>
    </location>
</feature>
<feature type="helix" evidence="5">
    <location>
        <begin position="60"/>
        <end position="67"/>
    </location>
</feature>
<feature type="turn" evidence="5">
    <location>
        <begin position="68"/>
        <end position="70"/>
    </location>
</feature>
<feature type="strand" evidence="5">
    <location>
        <begin position="72"/>
        <end position="74"/>
    </location>
</feature>
<evidence type="ECO:0000250" key="1"/>
<evidence type="ECO:0000255" key="2">
    <source>
        <dbReference type="PROSITE-ProRule" id="PRU00280"/>
    </source>
</evidence>
<evidence type="ECO:0000256" key="3">
    <source>
        <dbReference type="SAM" id="MobiDB-lite"/>
    </source>
</evidence>
<evidence type="ECO:0000305" key="4"/>
<evidence type="ECO:0007829" key="5">
    <source>
        <dbReference type="PDB" id="2LDI"/>
    </source>
</evidence>
<gene>
    <name type="primary">ziaA</name>
    <name type="ordered locus">slr0798</name>
</gene>
<reference key="1">
    <citation type="journal article" date="1995" name="DNA Res.">
        <title>Sequence analysis of the genome of the unicellular cyanobacterium Synechocystis sp. strain PCC6803. I. Sequence features in the 1 Mb region from map positions 64% to 92% of the genome.</title>
        <authorList>
            <person name="Kaneko T."/>
            <person name="Tanaka A."/>
            <person name="Sato S."/>
            <person name="Kotani H."/>
            <person name="Sazuka T."/>
            <person name="Miyajima N."/>
            <person name="Sugiura M."/>
            <person name="Tabata S."/>
        </authorList>
    </citation>
    <scope>NUCLEOTIDE SEQUENCE [LARGE SCALE GENOMIC DNA]</scope>
    <source>
        <strain>ATCC 27184 / PCC 6803 / N-1</strain>
    </source>
</reference>
<reference key="2">
    <citation type="journal article" date="1996" name="DNA Res.">
        <title>Sequence analysis of the genome of the unicellular cyanobacterium Synechocystis sp. strain PCC6803. II. Sequence determination of the entire genome and assignment of potential protein-coding regions.</title>
        <authorList>
            <person name="Kaneko T."/>
            <person name="Sato S."/>
            <person name="Kotani H."/>
            <person name="Tanaka A."/>
            <person name="Asamizu E."/>
            <person name="Nakamura Y."/>
            <person name="Miyajima N."/>
            <person name="Hirosawa M."/>
            <person name="Sugiura M."/>
            <person name="Sasamoto S."/>
            <person name="Kimura T."/>
            <person name="Hosouchi T."/>
            <person name="Matsuno A."/>
            <person name="Muraki A."/>
            <person name="Nakazaki N."/>
            <person name="Naruo K."/>
            <person name="Okumura S."/>
            <person name="Shimpo S."/>
            <person name="Takeuchi C."/>
            <person name="Wada T."/>
            <person name="Watanabe A."/>
            <person name="Yamada M."/>
            <person name="Yasuda M."/>
            <person name="Tabata S."/>
        </authorList>
    </citation>
    <scope>NUCLEOTIDE SEQUENCE [LARGE SCALE GENOMIC DNA]</scope>
    <source>
        <strain>ATCC 27184 / PCC 6803 / Kazusa</strain>
    </source>
</reference>
<reference key="3">
    <citation type="journal article" date="1998" name="Proc. Natl. Acad. Sci. U.S.A.">
        <title>An SmtB-like repressor from Synechocystis PCC 6803 regulates a zinc exporter.</title>
        <authorList>
            <person name="Thelwell C."/>
            <person name="Robinson N.J."/>
            <person name="Turner-Cavet J.S."/>
        </authorList>
    </citation>
    <scope>CHARACTERIZATION</scope>
</reference>
<comment type="catalytic activity">
    <reaction>
        <text>Zn(2+)(in) + ATP + H2O = Zn(2+)(out) + ADP + phosphate + H(+)</text>
        <dbReference type="Rhea" id="RHEA:20621"/>
        <dbReference type="ChEBI" id="CHEBI:15377"/>
        <dbReference type="ChEBI" id="CHEBI:15378"/>
        <dbReference type="ChEBI" id="CHEBI:29105"/>
        <dbReference type="ChEBI" id="CHEBI:30616"/>
        <dbReference type="ChEBI" id="CHEBI:43474"/>
        <dbReference type="ChEBI" id="CHEBI:456216"/>
        <dbReference type="EC" id="7.2.2.12"/>
    </reaction>
</comment>
<comment type="subcellular location">
    <subcellularLocation>
        <location>Cell membrane</location>
        <topology>Multi-pass membrane protein</topology>
    </subcellularLocation>
</comment>
<comment type="similarity">
    <text evidence="4">Belongs to the cation transport ATPase (P-type) (TC 3.A.3) family. Type IB subfamily.</text>
</comment>
<protein>
    <recommendedName>
        <fullName>Zinc-transporting ATPase</fullName>
        <ecNumber>7.2.2.12</ecNumber>
    </recommendedName>
    <alternativeName>
        <fullName>Zn(2+)-translocating P-type ATPase</fullName>
    </alternativeName>
</protein>
<name>ATZN_SYNY3</name>
<keyword id="KW-0002">3D-structure</keyword>
<keyword id="KW-0067">ATP-binding</keyword>
<keyword id="KW-1003">Cell membrane</keyword>
<keyword id="KW-0406">Ion transport</keyword>
<keyword id="KW-0460">Magnesium</keyword>
<keyword id="KW-0472">Membrane</keyword>
<keyword id="KW-0479">Metal-binding</keyword>
<keyword id="KW-0547">Nucleotide-binding</keyword>
<keyword id="KW-0597">Phosphoprotein</keyword>
<keyword id="KW-1185">Reference proteome</keyword>
<keyword id="KW-1278">Translocase</keyword>
<keyword id="KW-0812">Transmembrane</keyword>
<keyword id="KW-1133">Transmembrane helix</keyword>
<keyword id="KW-0813">Transport</keyword>
<keyword id="KW-0862">Zinc</keyword>
<keyword id="KW-0864">Zinc transport</keyword>
<proteinExistence type="evidence at protein level"/>
<sequence>MTQSSPLKTQQMQVGGMDCTSCKLKIEGSLERLKGVAEASVTVATGRLTVTYDPKQVSEITIQERIAALGYTLAEPKSSVTLNGHKHPHSHREEGHSHSHGAGEFNLKQELLPVLTAIALFTIAILFEQPLHNTPGQIAEFAVIIPAYLLSGWTVLKTAGRNILRGQIFDENFLMTIATLGALAIHQLPEAVAVMLFFRVGELFQEYSVGRSRRSIKALLEARPDTANLKRNGTVQQVSPETVQVDDLILVKPGEKVPLDGEILGGTSQVDTSALTGESVPGTVKPGDTILAGMINQSGVLTIRVTKLFSESSIAKVLDLVENASSKKASTEKFITQFARYYTPVIVFLSLAVALLPPLFIPGADRADWVYRALVLLVISCPCGLVISIPLGYFGGIGGAAKHGILIKGSTFLDSLTAVKTVVFDKTGTLTKGTFKVTQVVTKNGFSESELLTLAAKAESHSTHPIALSIREAYAQSIADSEVADYEEIAGHGIRAVVQNQVVIAGNDRLLHREKIDHDTCDVAGTVVHLAVDGRYGGYILIADEIKEDAVQAIRDLKRMGVEKTVMLTGDSEIVAQSVAQQIGLDAFVAELLPEEKVDEIEQLLDPSGKAKLAFVGDGINDAPVIARADVGIAMGGLGSDAAIETADVVLMTDAPSKVAEAIHVARKTRQIVVQNIVLALGIKALFIALGTIGLATLWEAVFADVGVALLAILNATRIAK</sequence>
<dbReference type="EC" id="7.2.2.12"/>
<dbReference type="EMBL" id="BA000022">
    <property type="protein sequence ID" value="BAA10707.1"/>
    <property type="molecule type" value="Genomic_DNA"/>
</dbReference>
<dbReference type="PIR" id="S77015">
    <property type="entry name" value="S77015"/>
</dbReference>
<dbReference type="PDB" id="2LDI">
    <property type="method" value="NMR"/>
    <property type="chains" value="A=6-111"/>
</dbReference>
<dbReference type="PDB" id="2OFG">
    <property type="method" value="NMR"/>
    <property type="chains" value="X=1-111"/>
</dbReference>
<dbReference type="PDB" id="2OFH">
    <property type="method" value="NMR"/>
    <property type="chains" value="X=1-111"/>
</dbReference>
<dbReference type="PDBsum" id="2LDI"/>
<dbReference type="PDBsum" id="2OFG"/>
<dbReference type="PDBsum" id="2OFH"/>
<dbReference type="SMR" id="Q59998"/>
<dbReference type="FunCoup" id="Q59998">
    <property type="interactions" value="17"/>
</dbReference>
<dbReference type="IntAct" id="Q59998">
    <property type="interactions" value="25"/>
</dbReference>
<dbReference type="STRING" id="1148.gene:10500211"/>
<dbReference type="PaxDb" id="1148-1001826"/>
<dbReference type="EnsemblBacteria" id="BAA10707">
    <property type="protein sequence ID" value="BAA10707"/>
    <property type="gene ID" value="BAA10707"/>
</dbReference>
<dbReference type="KEGG" id="syn:slr0798"/>
<dbReference type="eggNOG" id="COG2217">
    <property type="taxonomic scope" value="Bacteria"/>
</dbReference>
<dbReference type="InParanoid" id="Q59998"/>
<dbReference type="PhylomeDB" id="Q59998"/>
<dbReference type="EvolutionaryTrace" id="Q59998"/>
<dbReference type="Proteomes" id="UP000001425">
    <property type="component" value="Chromosome"/>
</dbReference>
<dbReference type="GO" id="GO:0016020">
    <property type="term" value="C:membrane"/>
    <property type="evidence" value="ECO:0000318"/>
    <property type="project" value="GO_Central"/>
</dbReference>
<dbReference type="GO" id="GO:0005886">
    <property type="term" value="C:plasma membrane"/>
    <property type="evidence" value="ECO:0007669"/>
    <property type="project" value="UniProtKB-SubCell"/>
</dbReference>
<dbReference type="GO" id="GO:0005524">
    <property type="term" value="F:ATP binding"/>
    <property type="evidence" value="ECO:0007669"/>
    <property type="project" value="UniProtKB-KW"/>
</dbReference>
<dbReference type="GO" id="GO:0016887">
    <property type="term" value="F:ATP hydrolysis activity"/>
    <property type="evidence" value="ECO:0007669"/>
    <property type="project" value="InterPro"/>
</dbReference>
<dbReference type="GO" id="GO:0015086">
    <property type="term" value="F:cadmium ion transmembrane transporter activity"/>
    <property type="evidence" value="ECO:0000318"/>
    <property type="project" value="GO_Central"/>
</dbReference>
<dbReference type="GO" id="GO:0046872">
    <property type="term" value="F:metal ion binding"/>
    <property type="evidence" value="ECO:0007669"/>
    <property type="project" value="UniProtKB-KW"/>
</dbReference>
<dbReference type="GO" id="GO:0016463">
    <property type="term" value="F:P-type zinc transporter activity"/>
    <property type="evidence" value="ECO:0007669"/>
    <property type="project" value="UniProtKB-EC"/>
</dbReference>
<dbReference type="GO" id="GO:0030001">
    <property type="term" value="P:metal ion transport"/>
    <property type="evidence" value="ECO:0000318"/>
    <property type="project" value="GO_Central"/>
</dbReference>
<dbReference type="GO" id="GO:0055085">
    <property type="term" value="P:transmembrane transport"/>
    <property type="evidence" value="ECO:0000318"/>
    <property type="project" value="GO_Central"/>
</dbReference>
<dbReference type="CDD" id="cd00371">
    <property type="entry name" value="HMA"/>
    <property type="match status" value="1"/>
</dbReference>
<dbReference type="CDD" id="cd07548">
    <property type="entry name" value="P-type_ATPase-Cd_Zn_Co_like"/>
    <property type="match status" value="1"/>
</dbReference>
<dbReference type="FunFam" id="3.30.70.100:FF:000001">
    <property type="entry name" value="ATPase copper transporting beta"/>
    <property type="match status" value="1"/>
</dbReference>
<dbReference type="FunFam" id="3.40.1110.10:FF:000066">
    <property type="entry name" value="Cadmium-translocating P-type ATPase"/>
    <property type="match status" value="1"/>
</dbReference>
<dbReference type="FunFam" id="2.70.150.10:FF:000002">
    <property type="entry name" value="Copper-transporting ATPase 1, putative"/>
    <property type="match status" value="1"/>
</dbReference>
<dbReference type="Gene3D" id="3.30.70.100">
    <property type="match status" value="1"/>
</dbReference>
<dbReference type="Gene3D" id="3.40.1110.10">
    <property type="entry name" value="Calcium-transporting ATPase, cytoplasmic domain N"/>
    <property type="match status" value="1"/>
</dbReference>
<dbReference type="Gene3D" id="2.70.150.10">
    <property type="entry name" value="Calcium-transporting ATPase, cytoplasmic transduction domain A"/>
    <property type="match status" value="1"/>
</dbReference>
<dbReference type="Gene3D" id="3.40.50.1000">
    <property type="entry name" value="HAD superfamily/HAD-like"/>
    <property type="match status" value="1"/>
</dbReference>
<dbReference type="InterPro" id="IPR023299">
    <property type="entry name" value="ATPase_P-typ_cyto_dom_N"/>
</dbReference>
<dbReference type="InterPro" id="IPR018303">
    <property type="entry name" value="ATPase_P-typ_P_site"/>
</dbReference>
<dbReference type="InterPro" id="IPR023298">
    <property type="entry name" value="ATPase_P-typ_TM_dom_sf"/>
</dbReference>
<dbReference type="InterPro" id="IPR008250">
    <property type="entry name" value="ATPase_P-typ_transduc_dom_A_sf"/>
</dbReference>
<dbReference type="InterPro" id="IPR051014">
    <property type="entry name" value="Cation_Transport_ATPase_IB"/>
</dbReference>
<dbReference type="InterPro" id="IPR036412">
    <property type="entry name" value="HAD-like_sf"/>
</dbReference>
<dbReference type="InterPro" id="IPR023214">
    <property type="entry name" value="HAD_sf"/>
</dbReference>
<dbReference type="InterPro" id="IPR017969">
    <property type="entry name" value="Heavy-metal-associated_CS"/>
</dbReference>
<dbReference type="InterPro" id="IPR006121">
    <property type="entry name" value="HMA_dom"/>
</dbReference>
<dbReference type="InterPro" id="IPR036163">
    <property type="entry name" value="HMA_dom_sf"/>
</dbReference>
<dbReference type="InterPro" id="IPR027256">
    <property type="entry name" value="P-typ_ATPase_IB"/>
</dbReference>
<dbReference type="InterPro" id="IPR001757">
    <property type="entry name" value="P_typ_ATPase"/>
</dbReference>
<dbReference type="InterPro" id="IPR044492">
    <property type="entry name" value="P_typ_ATPase_HD_dom"/>
</dbReference>
<dbReference type="NCBIfam" id="TIGR01512">
    <property type="entry name" value="ATPase-IB2_Cd"/>
    <property type="match status" value="1"/>
</dbReference>
<dbReference type="NCBIfam" id="TIGR01525">
    <property type="entry name" value="ATPase-IB_hvy"/>
    <property type="match status" value="1"/>
</dbReference>
<dbReference type="NCBIfam" id="TIGR01494">
    <property type="entry name" value="ATPase_P-type"/>
    <property type="match status" value="1"/>
</dbReference>
<dbReference type="PANTHER" id="PTHR48085">
    <property type="entry name" value="CADMIUM/ZINC-TRANSPORTING ATPASE HMA2-RELATED"/>
    <property type="match status" value="1"/>
</dbReference>
<dbReference type="PANTHER" id="PTHR48085:SF5">
    <property type="entry name" value="CADMIUM_ZINC-TRANSPORTING ATPASE HMA4-RELATED"/>
    <property type="match status" value="1"/>
</dbReference>
<dbReference type="Pfam" id="PF00122">
    <property type="entry name" value="E1-E2_ATPase"/>
    <property type="match status" value="1"/>
</dbReference>
<dbReference type="Pfam" id="PF00403">
    <property type="entry name" value="HMA"/>
    <property type="match status" value="1"/>
</dbReference>
<dbReference type="Pfam" id="PF00702">
    <property type="entry name" value="Hydrolase"/>
    <property type="match status" value="1"/>
</dbReference>
<dbReference type="PRINTS" id="PR00119">
    <property type="entry name" value="CATATPASE"/>
</dbReference>
<dbReference type="PRINTS" id="PR00941">
    <property type="entry name" value="CDATPASE"/>
</dbReference>
<dbReference type="SFLD" id="SFLDG00002">
    <property type="entry name" value="C1.7:_P-type_atpase_like"/>
    <property type="match status" value="1"/>
</dbReference>
<dbReference type="SFLD" id="SFLDF00027">
    <property type="entry name" value="p-type_atpase"/>
    <property type="match status" value="1"/>
</dbReference>
<dbReference type="SUPFAM" id="SSF81653">
    <property type="entry name" value="Calcium ATPase, transduction domain A"/>
    <property type="match status" value="1"/>
</dbReference>
<dbReference type="SUPFAM" id="SSF81665">
    <property type="entry name" value="Calcium ATPase, transmembrane domain M"/>
    <property type="match status" value="1"/>
</dbReference>
<dbReference type="SUPFAM" id="SSF56784">
    <property type="entry name" value="HAD-like"/>
    <property type="match status" value="1"/>
</dbReference>
<dbReference type="SUPFAM" id="SSF55008">
    <property type="entry name" value="HMA, heavy metal-associated domain"/>
    <property type="match status" value="1"/>
</dbReference>
<dbReference type="PROSITE" id="PS00154">
    <property type="entry name" value="ATPASE_E1_E2"/>
    <property type="match status" value="1"/>
</dbReference>
<dbReference type="PROSITE" id="PS01047">
    <property type="entry name" value="HMA_1"/>
    <property type="match status" value="1"/>
</dbReference>
<dbReference type="PROSITE" id="PS50846">
    <property type="entry name" value="HMA_2"/>
    <property type="match status" value="1"/>
</dbReference>
<organism>
    <name type="scientific">Synechocystis sp. (strain ATCC 27184 / PCC 6803 / Kazusa)</name>
    <dbReference type="NCBI Taxonomy" id="1111708"/>
    <lineage>
        <taxon>Bacteria</taxon>
        <taxon>Bacillati</taxon>
        <taxon>Cyanobacteriota</taxon>
        <taxon>Cyanophyceae</taxon>
        <taxon>Synechococcales</taxon>
        <taxon>Merismopediaceae</taxon>
        <taxon>Synechocystis</taxon>
    </lineage>
</organism>
<accession>Q59998</accession>